<comment type="function">
    <text evidence="1">One of the primary rRNA binding proteins, it binds directly to 16S rRNA central domain where it helps coordinate assembly of the platform of the 30S subunit.</text>
</comment>
<comment type="subunit">
    <text evidence="1">Part of the 30S ribosomal subunit.</text>
</comment>
<comment type="subcellular location">
    <subcellularLocation>
        <location>Plastid</location>
        <location>Chloroplast</location>
    </subcellularLocation>
</comment>
<comment type="similarity">
    <text evidence="2">Belongs to the universal ribosomal protein uS8 family.</text>
</comment>
<sequence>MGRDTIADIITSIRNADMDKKRVVRIASTNITENVVKILLREGFIENVRKHQENKKDFLVLTLRHRRNRKRPYRNILNLKRISRPGLRIYSNYQRIPRILGGIGIVILSTSRGIMTDREARLERIGGEILCYIW</sequence>
<name>RR8_PANGI</name>
<evidence type="ECO:0000250" key="1"/>
<evidence type="ECO:0000305" key="2"/>
<proteinExistence type="inferred from homology"/>
<gene>
    <name type="primary">rps8</name>
    <name type="ORF">PSC0821</name>
</gene>
<geneLocation type="chloroplast"/>
<protein>
    <recommendedName>
        <fullName evidence="2">Small ribosomal subunit protein uS8c</fullName>
    </recommendedName>
    <alternativeName>
        <fullName>30S ribosomal protein S8, chloroplastic</fullName>
    </alternativeName>
</protein>
<feature type="chain" id="PRO_0000126586" description="Small ribosomal subunit protein uS8c">
    <location>
        <begin position="1"/>
        <end position="134"/>
    </location>
</feature>
<accession>Q68RX1</accession>
<reference key="1">
    <citation type="journal article" date="2004" name="DNA Res.">
        <title>Complete chloroplast genome sequence from Korea ginseng (Panax schinseng Nees) and comparative analysis of sequence evolution among 17 vascular plants.</title>
        <authorList>
            <person name="Kim K.-J."/>
            <person name="Lee H.-L."/>
        </authorList>
    </citation>
    <scope>NUCLEOTIDE SEQUENCE [LARGE SCALE GENOMIC DNA]</scope>
</reference>
<organism>
    <name type="scientific">Panax ginseng</name>
    <name type="common">Korean ginseng</name>
    <dbReference type="NCBI Taxonomy" id="4054"/>
    <lineage>
        <taxon>Eukaryota</taxon>
        <taxon>Viridiplantae</taxon>
        <taxon>Streptophyta</taxon>
        <taxon>Embryophyta</taxon>
        <taxon>Tracheophyta</taxon>
        <taxon>Spermatophyta</taxon>
        <taxon>Magnoliopsida</taxon>
        <taxon>eudicotyledons</taxon>
        <taxon>Gunneridae</taxon>
        <taxon>Pentapetalae</taxon>
        <taxon>asterids</taxon>
        <taxon>campanulids</taxon>
        <taxon>Apiales</taxon>
        <taxon>Araliaceae</taxon>
        <taxon>Panax</taxon>
    </lineage>
</organism>
<dbReference type="EMBL" id="AY582139">
    <property type="protein sequence ID" value="AAT98544.1"/>
    <property type="molecule type" value="Genomic_DNA"/>
</dbReference>
<dbReference type="RefSeq" id="YP_087001.1">
    <property type="nucleotide sequence ID" value="NC_006290.1"/>
</dbReference>
<dbReference type="SMR" id="Q68RX1"/>
<dbReference type="GeneID" id="3021540"/>
<dbReference type="GO" id="GO:0009507">
    <property type="term" value="C:chloroplast"/>
    <property type="evidence" value="ECO:0007669"/>
    <property type="project" value="UniProtKB-SubCell"/>
</dbReference>
<dbReference type="GO" id="GO:1990904">
    <property type="term" value="C:ribonucleoprotein complex"/>
    <property type="evidence" value="ECO:0007669"/>
    <property type="project" value="UniProtKB-KW"/>
</dbReference>
<dbReference type="GO" id="GO:0005840">
    <property type="term" value="C:ribosome"/>
    <property type="evidence" value="ECO:0007669"/>
    <property type="project" value="UniProtKB-KW"/>
</dbReference>
<dbReference type="GO" id="GO:0019843">
    <property type="term" value="F:rRNA binding"/>
    <property type="evidence" value="ECO:0007669"/>
    <property type="project" value="UniProtKB-UniRule"/>
</dbReference>
<dbReference type="GO" id="GO:0003735">
    <property type="term" value="F:structural constituent of ribosome"/>
    <property type="evidence" value="ECO:0007669"/>
    <property type="project" value="InterPro"/>
</dbReference>
<dbReference type="GO" id="GO:0006412">
    <property type="term" value="P:translation"/>
    <property type="evidence" value="ECO:0007669"/>
    <property type="project" value="UniProtKB-UniRule"/>
</dbReference>
<dbReference type="FunFam" id="3.30.1490.10:FF:000001">
    <property type="entry name" value="30S ribosomal protein S8"/>
    <property type="match status" value="1"/>
</dbReference>
<dbReference type="FunFam" id="3.30.1370.30:FF:000004">
    <property type="entry name" value="30S ribosomal protein S8, chloroplastic"/>
    <property type="match status" value="1"/>
</dbReference>
<dbReference type="Gene3D" id="3.30.1370.30">
    <property type="match status" value="1"/>
</dbReference>
<dbReference type="Gene3D" id="3.30.1490.10">
    <property type="match status" value="1"/>
</dbReference>
<dbReference type="HAMAP" id="MF_01302_B">
    <property type="entry name" value="Ribosomal_uS8_B"/>
    <property type="match status" value="1"/>
</dbReference>
<dbReference type="InterPro" id="IPR000630">
    <property type="entry name" value="Ribosomal_uS8"/>
</dbReference>
<dbReference type="InterPro" id="IPR047863">
    <property type="entry name" value="Ribosomal_uS8_CS"/>
</dbReference>
<dbReference type="InterPro" id="IPR035987">
    <property type="entry name" value="Ribosomal_uS8_sf"/>
</dbReference>
<dbReference type="NCBIfam" id="NF001109">
    <property type="entry name" value="PRK00136.1"/>
    <property type="match status" value="1"/>
</dbReference>
<dbReference type="PANTHER" id="PTHR11758">
    <property type="entry name" value="40S RIBOSOMAL PROTEIN S15A"/>
    <property type="match status" value="1"/>
</dbReference>
<dbReference type="Pfam" id="PF00410">
    <property type="entry name" value="Ribosomal_S8"/>
    <property type="match status" value="1"/>
</dbReference>
<dbReference type="SUPFAM" id="SSF56047">
    <property type="entry name" value="Ribosomal protein S8"/>
    <property type="match status" value="1"/>
</dbReference>
<dbReference type="PROSITE" id="PS00053">
    <property type="entry name" value="RIBOSOMAL_S8"/>
    <property type="match status" value="1"/>
</dbReference>
<keyword id="KW-0150">Chloroplast</keyword>
<keyword id="KW-0934">Plastid</keyword>
<keyword id="KW-0687">Ribonucleoprotein</keyword>
<keyword id="KW-0689">Ribosomal protein</keyword>
<keyword id="KW-0694">RNA-binding</keyword>
<keyword id="KW-0699">rRNA-binding</keyword>